<name>LFTR_RHIJ3</name>
<protein>
    <recommendedName>
        <fullName evidence="1">Leucyl/phenylalanyl-tRNA--protein transferase</fullName>
        <ecNumber evidence="1">2.3.2.6</ecNumber>
    </recommendedName>
    <alternativeName>
        <fullName evidence="1">L/F-transferase</fullName>
    </alternativeName>
    <alternativeName>
        <fullName evidence="1">Leucyltransferase</fullName>
    </alternativeName>
    <alternativeName>
        <fullName evidence="1">Phenyalanyltransferase</fullName>
    </alternativeName>
</protein>
<feature type="chain" id="PRO_0000258086" description="Leucyl/phenylalanyl-tRNA--protein transferase">
    <location>
        <begin position="1"/>
        <end position="204"/>
    </location>
</feature>
<evidence type="ECO:0000255" key="1">
    <source>
        <dbReference type="HAMAP-Rule" id="MF_00688"/>
    </source>
</evidence>
<reference key="1">
    <citation type="journal article" date="2006" name="Genome Biol.">
        <title>The genome of Rhizobium leguminosarum has recognizable core and accessory components.</title>
        <authorList>
            <person name="Young J.P.W."/>
            <person name="Crossman L.C."/>
            <person name="Johnston A.W.B."/>
            <person name="Thomson N.R."/>
            <person name="Ghazoui Z.F."/>
            <person name="Hull K.H."/>
            <person name="Wexler M."/>
            <person name="Curson A.R.J."/>
            <person name="Todd J.D."/>
            <person name="Poole P.S."/>
            <person name="Mauchline T.H."/>
            <person name="East A.K."/>
            <person name="Quail M.A."/>
            <person name="Churcher C."/>
            <person name="Arrowsmith C."/>
            <person name="Cherevach I."/>
            <person name="Chillingworth T."/>
            <person name="Clarke K."/>
            <person name="Cronin A."/>
            <person name="Davis P."/>
            <person name="Fraser A."/>
            <person name="Hance Z."/>
            <person name="Hauser H."/>
            <person name="Jagels K."/>
            <person name="Moule S."/>
            <person name="Mungall K."/>
            <person name="Norbertczak H."/>
            <person name="Rabbinowitsch E."/>
            <person name="Sanders M."/>
            <person name="Simmonds M."/>
            <person name="Whitehead S."/>
            <person name="Parkhill J."/>
        </authorList>
    </citation>
    <scope>NUCLEOTIDE SEQUENCE [LARGE SCALE GENOMIC DNA]</scope>
    <source>
        <strain>DSM 114642 / LMG 32736 / 3841</strain>
    </source>
</reference>
<sequence>MAGSRRKSPGITPDILLRAYSIGLFPMAESADDPEIFWVEPELRGVLPFDHFHVSKSLAKTVRKKPFEIRFDHAFDQVIAACAEETSGRPSTWINRTIRSLYSTLFDMGHAHTVEAWEGNELVGGLYGVSLGSAFFGESMFSRRTDASKICLVHLVDRLRERGFTLLDTQFTTEHLKTFGAIDVPKADYAAMLTAAMESPHLKF</sequence>
<keyword id="KW-0012">Acyltransferase</keyword>
<keyword id="KW-0963">Cytoplasm</keyword>
<keyword id="KW-0808">Transferase</keyword>
<accession>Q1MHI4</accession>
<dbReference type="EC" id="2.3.2.6" evidence="1"/>
<dbReference type="EMBL" id="AM236080">
    <property type="protein sequence ID" value="CAK07579.1"/>
    <property type="molecule type" value="Genomic_DNA"/>
</dbReference>
<dbReference type="RefSeq" id="WP_011651692.1">
    <property type="nucleotide sequence ID" value="NC_008380.1"/>
</dbReference>
<dbReference type="SMR" id="Q1MHI4"/>
<dbReference type="EnsemblBacteria" id="CAK07579">
    <property type="protein sequence ID" value="CAK07579"/>
    <property type="gene ID" value="RL2087"/>
</dbReference>
<dbReference type="KEGG" id="rle:RL2087"/>
<dbReference type="eggNOG" id="COG2360">
    <property type="taxonomic scope" value="Bacteria"/>
</dbReference>
<dbReference type="HOGENOM" id="CLU_075045_1_1_5"/>
<dbReference type="Proteomes" id="UP000006575">
    <property type="component" value="Chromosome"/>
</dbReference>
<dbReference type="GO" id="GO:0005737">
    <property type="term" value="C:cytoplasm"/>
    <property type="evidence" value="ECO:0007669"/>
    <property type="project" value="UniProtKB-SubCell"/>
</dbReference>
<dbReference type="GO" id="GO:0008914">
    <property type="term" value="F:leucyl-tRNA--protein transferase activity"/>
    <property type="evidence" value="ECO:0007669"/>
    <property type="project" value="UniProtKB-UniRule"/>
</dbReference>
<dbReference type="GO" id="GO:0030163">
    <property type="term" value="P:protein catabolic process"/>
    <property type="evidence" value="ECO:0007669"/>
    <property type="project" value="UniProtKB-UniRule"/>
</dbReference>
<dbReference type="FunFam" id="3.40.630.70:FF:000001">
    <property type="entry name" value="Leucyl/phenylalanyl-tRNA--protein transferase"/>
    <property type="match status" value="1"/>
</dbReference>
<dbReference type="Gene3D" id="3.40.630.70">
    <property type="entry name" value="Leucyl/phenylalanyl-tRNA-protein transferase, C-terminal domain"/>
    <property type="match status" value="1"/>
</dbReference>
<dbReference type="HAMAP" id="MF_00688">
    <property type="entry name" value="Leu_Phe_trans"/>
    <property type="match status" value="1"/>
</dbReference>
<dbReference type="InterPro" id="IPR016181">
    <property type="entry name" value="Acyl_CoA_acyltransferase"/>
</dbReference>
<dbReference type="InterPro" id="IPR004616">
    <property type="entry name" value="Leu/Phe-tRNA_Trfase"/>
</dbReference>
<dbReference type="InterPro" id="IPR042203">
    <property type="entry name" value="Leu/Phe-tRNA_Trfase_C"/>
</dbReference>
<dbReference type="NCBIfam" id="TIGR00667">
    <property type="entry name" value="aat"/>
    <property type="match status" value="1"/>
</dbReference>
<dbReference type="PANTHER" id="PTHR30098">
    <property type="entry name" value="LEUCYL/PHENYLALANYL-TRNA--PROTEIN TRANSFERASE"/>
    <property type="match status" value="1"/>
</dbReference>
<dbReference type="PANTHER" id="PTHR30098:SF2">
    <property type="entry name" value="LEUCYL_PHENYLALANYL-TRNA--PROTEIN TRANSFERASE"/>
    <property type="match status" value="1"/>
</dbReference>
<dbReference type="Pfam" id="PF03588">
    <property type="entry name" value="Leu_Phe_trans"/>
    <property type="match status" value="1"/>
</dbReference>
<dbReference type="SUPFAM" id="SSF55729">
    <property type="entry name" value="Acyl-CoA N-acyltransferases (Nat)"/>
    <property type="match status" value="1"/>
</dbReference>
<organism>
    <name type="scientific">Rhizobium johnstonii (strain DSM 114642 / LMG 32736 / 3841)</name>
    <name type="common">Rhizobium leguminosarum bv. viciae</name>
    <dbReference type="NCBI Taxonomy" id="216596"/>
    <lineage>
        <taxon>Bacteria</taxon>
        <taxon>Pseudomonadati</taxon>
        <taxon>Pseudomonadota</taxon>
        <taxon>Alphaproteobacteria</taxon>
        <taxon>Hyphomicrobiales</taxon>
        <taxon>Rhizobiaceae</taxon>
        <taxon>Rhizobium/Agrobacterium group</taxon>
        <taxon>Rhizobium</taxon>
        <taxon>Rhizobium johnstonii</taxon>
    </lineage>
</organism>
<gene>
    <name evidence="1" type="primary">aat</name>
    <name type="ordered locus">RL2087</name>
</gene>
<comment type="function">
    <text evidence="1">Functions in the N-end rule pathway of protein degradation where it conjugates Leu, Phe and, less efficiently, Met from aminoacyl-tRNAs to the N-termini of proteins containing an N-terminal arginine or lysine.</text>
</comment>
<comment type="catalytic activity">
    <reaction evidence="1">
        <text>N-terminal L-lysyl-[protein] + L-leucyl-tRNA(Leu) = N-terminal L-leucyl-L-lysyl-[protein] + tRNA(Leu) + H(+)</text>
        <dbReference type="Rhea" id="RHEA:12340"/>
        <dbReference type="Rhea" id="RHEA-COMP:9613"/>
        <dbReference type="Rhea" id="RHEA-COMP:9622"/>
        <dbReference type="Rhea" id="RHEA-COMP:12670"/>
        <dbReference type="Rhea" id="RHEA-COMP:12671"/>
        <dbReference type="ChEBI" id="CHEBI:15378"/>
        <dbReference type="ChEBI" id="CHEBI:65249"/>
        <dbReference type="ChEBI" id="CHEBI:78442"/>
        <dbReference type="ChEBI" id="CHEBI:78494"/>
        <dbReference type="ChEBI" id="CHEBI:133043"/>
        <dbReference type="EC" id="2.3.2.6"/>
    </reaction>
</comment>
<comment type="catalytic activity">
    <reaction evidence="1">
        <text>N-terminal L-arginyl-[protein] + L-leucyl-tRNA(Leu) = N-terminal L-leucyl-L-arginyl-[protein] + tRNA(Leu) + H(+)</text>
        <dbReference type="Rhea" id="RHEA:50416"/>
        <dbReference type="Rhea" id="RHEA-COMP:9613"/>
        <dbReference type="Rhea" id="RHEA-COMP:9622"/>
        <dbReference type="Rhea" id="RHEA-COMP:12672"/>
        <dbReference type="Rhea" id="RHEA-COMP:12673"/>
        <dbReference type="ChEBI" id="CHEBI:15378"/>
        <dbReference type="ChEBI" id="CHEBI:64719"/>
        <dbReference type="ChEBI" id="CHEBI:78442"/>
        <dbReference type="ChEBI" id="CHEBI:78494"/>
        <dbReference type="ChEBI" id="CHEBI:133044"/>
        <dbReference type="EC" id="2.3.2.6"/>
    </reaction>
</comment>
<comment type="catalytic activity">
    <reaction evidence="1">
        <text>L-phenylalanyl-tRNA(Phe) + an N-terminal L-alpha-aminoacyl-[protein] = an N-terminal L-phenylalanyl-L-alpha-aminoacyl-[protein] + tRNA(Phe)</text>
        <dbReference type="Rhea" id="RHEA:43632"/>
        <dbReference type="Rhea" id="RHEA-COMP:9668"/>
        <dbReference type="Rhea" id="RHEA-COMP:9699"/>
        <dbReference type="Rhea" id="RHEA-COMP:10636"/>
        <dbReference type="Rhea" id="RHEA-COMP:10637"/>
        <dbReference type="ChEBI" id="CHEBI:78442"/>
        <dbReference type="ChEBI" id="CHEBI:78531"/>
        <dbReference type="ChEBI" id="CHEBI:78597"/>
        <dbReference type="ChEBI" id="CHEBI:83561"/>
        <dbReference type="EC" id="2.3.2.6"/>
    </reaction>
</comment>
<comment type="subcellular location">
    <subcellularLocation>
        <location evidence="1">Cytoplasm</location>
    </subcellularLocation>
</comment>
<comment type="similarity">
    <text evidence="1">Belongs to the L/F-transferase family.</text>
</comment>
<proteinExistence type="inferred from homology"/>